<accession>C3PP46</accession>
<gene>
    <name evidence="1" type="primary">pth</name>
    <name type="ordered locus">RAF_ORF0843</name>
</gene>
<reference key="1">
    <citation type="journal article" date="2009" name="BMC Genomics">
        <title>Analysis of the Rickettsia africae genome reveals that virulence acquisition in Rickettsia species may be explained by genome reduction.</title>
        <authorList>
            <person name="Fournier P.-E."/>
            <person name="El Karkouri K."/>
            <person name="Leroy Q."/>
            <person name="Robert C."/>
            <person name="Giumelli B."/>
            <person name="Renesto P."/>
            <person name="Socolovschi C."/>
            <person name="Parola P."/>
            <person name="Audic S."/>
            <person name="Raoult D."/>
        </authorList>
    </citation>
    <scope>NUCLEOTIDE SEQUENCE [LARGE SCALE GENOMIC DNA]</scope>
    <source>
        <strain>ESF-5</strain>
    </source>
</reference>
<name>PTH_RICAE</name>
<sequence length="185" mass="20774">MLLVIGLGNPGKEYQYTRHNVGFIAIEKIANQYNSSFSTKKKFNCEIAETISDGQKIIFIKPTTYMNLSGKSVISVKTYYNIYPAKIFVIHDDIDLDTGRIKFKTGGGNGGHNGLKSIDGVIGNNYNRIRIGVGRPQNNQDVADYVLNHFSKPEYETVMQAIDRITSNFGLILENKLEEFKNKIA</sequence>
<keyword id="KW-0963">Cytoplasm</keyword>
<keyword id="KW-0378">Hydrolase</keyword>
<keyword id="KW-0694">RNA-binding</keyword>
<keyword id="KW-0820">tRNA-binding</keyword>
<organism>
    <name type="scientific">Rickettsia africae (strain ESF-5)</name>
    <dbReference type="NCBI Taxonomy" id="347255"/>
    <lineage>
        <taxon>Bacteria</taxon>
        <taxon>Pseudomonadati</taxon>
        <taxon>Pseudomonadota</taxon>
        <taxon>Alphaproteobacteria</taxon>
        <taxon>Rickettsiales</taxon>
        <taxon>Rickettsiaceae</taxon>
        <taxon>Rickettsieae</taxon>
        <taxon>Rickettsia</taxon>
        <taxon>spotted fever group</taxon>
    </lineage>
</organism>
<dbReference type="EC" id="3.1.1.29" evidence="1"/>
<dbReference type="EMBL" id="CP001612">
    <property type="protein sequence ID" value="ACP53706.1"/>
    <property type="molecule type" value="Genomic_DNA"/>
</dbReference>
<dbReference type="RefSeq" id="WP_012719889.1">
    <property type="nucleotide sequence ID" value="NC_012633.1"/>
</dbReference>
<dbReference type="SMR" id="C3PP46"/>
<dbReference type="KEGG" id="raf:RAF_ORF0843"/>
<dbReference type="HOGENOM" id="CLU_062456_2_2_5"/>
<dbReference type="Proteomes" id="UP000002305">
    <property type="component" value="Chromosome"/>
</dbReference>
<dbReference type="GO" id="GO:0005737">
    <property type="term" value="C:cytoplasm"/>
    <property type="evidence" value="ECO:0007669"/>
    <property type="project" value="UniProtKB-SubCell"/>
</dbReference>
<dbReference type="GO" id="GO:0004045">
    <property type="term" value="F:peptidyl-tRNA hydrolase activity"/>
    <property type="evidence" value="ECO:0007669"/>
    <property type="project" value="UniProtKB-UniRule"/>
</dbReference>
<dbReference type="GO" id="GO:0000049">
    <property type="term" value="F:tRNA binding"/>
    <property type="evidence" value="ECO:0007669"/>
    <property type="project" value="UniProtKB-UniRule"/>
</dbReference>
<dbReference type="GO" id="GO:0006515">
    <property type="term" value="P:protein quality control for misfolded or incompletely synthesized proteins"/>
    <property type="evidence" value="ECO:0007669"/>
    <property type="project" value="UniProtKB-UniRule"/>
</dbReference>
<dbReference type="GO" id="GO:0072344">
    <property type="term" value="P:rescue of stalled ribosome"/>
    <property type="evidence" value="ECO:0007669"/>
    <property type="project" value="UniProtKB-UniRule"/>
</dbReference>
<dbReference type="CDD" id="cd00462">
    <property type="entry name" value="PTH"/>
    <property type="match status" value="1"/>
</dbReference>
<dbReference type="FunFam" id="3.40.50.1470:FF:000001">
    <property type="entry name" value="Peptidyl-tRNA hydrolase"/>
    <property type="match status" value="1"/>
</dbReference>
<dbReference type="Gene3D" id="3.40.50.1470">
    <property type="entry name" value="Peptidyl-tRNA hydrolase"/>
    <property type="match status" value="1"/>
</dbReference>
<dbReference type="HAMAP" id="MF_00083">
    <property type="entry name" value="Pept_tRNA_hydro_bact"/>
    <property type="match status" value="1"/>
</dbReference>
<dbReference type="InterPro" id="IPR001328">
    <property type="entry name" value="Pept_tRNA_hydro"/>
</dbReference>
<dbReference type="InterPro" id="IPR018171">
    <property type="entry name" value="Pept_tRNA_hydro_CS"/>
</dbReference>
<dbReference type="InterPro" id="IPR036416">
    <property type="entry name" value="Pept_tRNA_hydro_sf"/>
</dbReference>
<dbReference type="NCBIfam" id="TIGR00447">
    <property type="entry name" value="pth"/>
    <property type="match status" value="1"/>
</dbReference>
<dbReference type="PANTHER" id="PTHR17224">
    <property type="entry name" value="PEPTIDYL-TRNA HYDROLASE"/>
    <property type="match status" value="1"/>
</dbReference>
<dbReference type="PANTHER" id="PTHR17224:SF1">
    <property type="entry name" value="PEPTIDYL-TRNA HYDROLASE"/>
    <property type="match status" value="1"/>
</dbReference>
<dbReference type="Pfam" id="PF01195">
    <property type="entry name" value="Pept_tRNA_hydro"/>
    <property type="match status" value="1"/>
</dbReference>
<dbReference type="SUPFAM" id="SSF53178">
    <property type="entry name" value="Peptidyl-tRNA hydrolase-like"/>
    <property type="match status" value="1"/>
</dbReference>
<dbReference type="PROSITE" id="PS01195">
    <property type="entry name" value="PEPT_TRNA_HYDROL_1"/>
    <property type="match status" value="1"/>
</dbReference>
<dbReference type="PROSITE" id="PS01196">
    <property type="entry name" value="PEPT_TRNA_HYDROL_2"/>
    <property type="match status" value="1"/>
</dbReference>
<feature type="chain" id="PRO_1000202596" description="Peptidyl-tRNA hydrolase">
    <location>
        <begin position="1"/>
        <end position="185"/>
    </location>
</feature>
<feature type="active site" description="Proton acceptor" evidence="1">
    <location>
        <position position="19"/>
    </location>
</feature>
<feature type="binding site" evidence="1">
    <location>
        <position position="14"/>
    </location>
    <ligand>
        <name>tRNA</name>
        <dbReference type="ChEBI" id="CHEBI:17843"/>
    </ligand>
</feature>
<feature type="binding site" evidence="1">
    <location>
        <position position="65"/>
    </location>
    <ligand>
        <name>tRNA</name>
        <dbReference type="ChEBI" id="CHEBI:17843"/>
    </ligand>
</feature>
<feature type="binding site" evidence="1">
    <location>
        <position position="67"/>
    </location>
    <ligand>
        <name>tRNA</name>
        <dbReference type="ChEBI" id="CHEBI:17843"/>
    </ligand>
</feature>
<feature type="binding site" evidence="1">
    <location>
        <position position="113"/>
    </location>
    <ligand>
        <name>tRNA</name>
        <dbReference type="ChEBI" id="CHEBI:17843"/>
    </ligand>
</feature>
<feature type="site" description="Discriminates between blocked and unblocked aminoacyl-tRNA" evidence="1">
    <location>
        <position position="9"/>
    </location>
</feature>
<feature type="site" description="Stabilizes the basic form of H active site to accept a proton" evidence="1">
    <location>
        <position position="92"/>
    </location>
</feature>
<evidence type="ECO:0000255" key="1">
    <source>
        <dbReference type="HAMAP-Rule" id="MF_00083"/>
    </source>
</evidence>
<comment type="function">
    <text evidence="1">Hydrolyzes ribosome-free peptidyl-tRNAs (with 1 or more amino acids incorporated), which drop off the ribosome during protein synthesis, or as a result of ribosome stalling.</text>
</comment>
<comment type="function">
    <text evidence="1">Catalyzes the release of premature peptidyl moieties from peptidyl-tRNA molecules trapped in stalled 50S ribosomal subunits, and thus maintains levels of free tRNAs and 50S ribosomes.</text>
</comment>
<comment type="catalytic activity">
    <reaction evidence="1">
        <text>an N-acyl-L-alpha-aminoacyl-tRNA + H2O = an N-acyl-L-amino acid + a tRNA + H(+)</text>
        <dbReference type="Rhea" id="RHEA:54448"/>
        <dbReference type="Rhea" id="RHEA-COMP:10123"/>
        <dbReference type="Rhea" id="RHEA-COMP:13883"/>
        <dbReference type="ChEBI" id="CHEBI:15377"/>
        <dbReference type="ChEBI" id="CHEBI:15378"/>
        <dbReference type="ChEBI" id="CHEBI:59874"/>
        <dbReference type="ChEBI" id="CHEBI:78442"/>
        <dbReference type="ChEBI" id="CHEBI:138191"/>
        <dbReference type="EC" id="3.1.1.29"/>
    </reaction>
</comment>
<comment type="subunit">
    <text evidence="1">Monomer.</text>
</comment>
<comment type="subcellular location">
    <subcellularLocation>
        <location evidence="1">Cytoplasm</location>
    </subcellularLocation>
</comment>
<comment type="similarity">
    <text evidence="1">Belongs to the PTH family.</text>
</comment>
<proteinExistence type="inferred from homology"/>
<protein>
    <recommendedName>
        <fullName evidence="1">Peptidyl-tRNA hydrolase</fullName>
        <shortName evidence="1">Pth</shortName>
        <ecNumber evidence="1">3.1.1.29</ecNumber>
    </recommendedName>
</protein>